<evidence type="ECO:0000255" key="1">
    <source>
        <dbReference type="HAMAP-Rule" id="MF_01850"/>
    </source>
</evidence>
<proteinExistence type="inferred from homology"/>
<protein>
    <recommendedName>
        <fullName evidence="1">tRNA-cytidine(32) 2-sulfurtransferase</fullName>
        <ecNumber evidence="1">2.8.1.-</ecNumber>
    </recommendedName>
    <alternativeName>
        <fullName evidence="1">Two-thiocytidine biosynthesis protein A</fullName>
    </alternativeName>
    <alternativeName>
        <fullName evidence="1">tRNA 2-thiocytidine biosynthesis protein TtcA</fullName>
    </alternativeName>
</protein>
<accession>B1J1K3</accession>
<dbReference type="EC" id="2.8.1.-" evidence="1"/>
<dbReference type="EMBL" id="CP000949">
    <property type="protein sequence ID" value="ACA71708.1"/>
    <property type="molecule type" value="Genomic_DNA"/>
</dbReference>
<dbReference type="SMR" id="B1J1K3"/>
<dbReference type="STRING" id="390235.PputW619_1203"/>
<dbReference type="KEGG" id="ppw:PputW619_1203"/>
<dbReference type="eggNOG" id="COG0037">
    <property type="taxonomic scope" value="Bacteria"/>
</dbReference>
<dbReference type="HOGENOM" id="CLU_026481_0_0_6"/>
<dbReference type="OrthoDB" id="9801054at2"/>
<dbReference type="GO" id="GO:0005737">
    <property type="term" value="C:cytoplasm"/>
    <property type="evidence" value="ECO:0007669"/>
    <property type="project" value="UniProtKB-SubCell"/>
</dbReference>
<dbReference type="GO" id="GO:0051539">
    <property type="term" value="F:4 iron, 4 sulfur cluster binding"/>
    <property type="evidence" value="ECO:0007669"/>
    <property type="project" value="UniProtKB-UniRule"/>
</dbReference>
<dbReference type="GO" id="GO:0005524">
    <property type="term" value="F:ATP binding"/>
    <property type="evidence" value="ECO:0007669"/>
    <property type="project" value="UniProtKB-UniRule"/>
</dbReference>
<dbReference type="GO" id="GO:0000287">
    <property type="term" value="F:magnesium ion binding"/>
    <property type="evidence" value="ECO:0007669"/>
    <property type="project" value="UniProtKB-UniRule"/>
</dbReference>
<dbReference type="GO" id="GO:0016783">
    <property type="term" value="F:sulfurtransferase activity"/>
    <property type="evidence" value="ECO:0007669"/>
    <property type="project" value="UniProtKB-UniRule"/>
</dbReference>
<dbReference type="GO" id="GO:0000049">
    <property type="term" value="F:tRNA binding"/>
    <property type="evidence" value="ECO:0007669"/>
    <property type="project" value="UniProtKB-KW"/>
</dbReference>
<dbReference type="GO" id="GO:0034227">
    <property type="term" value="P:tRNA thio-modification"/>
    <property type="evidence" value="ECO:0007669"/>
    <property type="project" value="UniProtKB-UniRule"/>
</dbReference>
<dbReference type="CDD" id="cd24138">
    <property type="entry name" value="TtcA-like"/>
    <property type="match status" value="1"/>
</dbReference>
<dbReference type="Gene3D" id="3.40.50.620">
    <property type="entry name" value="HUPs"/>
    <property type="match status" value="1"/>
</dbReference>
<dbReference type="HAMAP" id="MF_01850">
    <property type="entry name" value="TtcA"/>
    <property type="match status" value="1"/>
</dbReference>
<dbReference type="InterPro" id="IPR014729">
    <property type="entry name" value="Rossmann-like_a/b/a_fold"/>
</dbReference>
<dbReference type="InterPro" id="IPR011063">
    <property type="entry name" value="TilS/TtcA_N"/>
</dbReference>
<dbReference type="InterPro" id="IPR012089">
    <property type="entry name" value="tRNA_Cyd_32_2_STrfase"/>
</dbReference>
<dbReference type="InterPro" id="IPR035107">
    <property type="entry name" value="tRNA_thiolation_TtcA_Ctu1"/>
</dbReference>
<dbReference type="NCBIfam" id="NF007972">
    <property type="entry name" value="PRK10696.1"/>
    <property type="match status" value="1"/>
</dbReference>
<dbReference type="PANTHER" id="PTHR43686:SF1">
    <property type="entry name" value="AMINOTRAN_5 DOMAIN-CONTAINING PROTEIN"/>
    <property type="match status" value="1"/>
</dbReference>
<dbReference type="PANTHER" id="PTHR43686">
    <property type="entry name" value="SULFURTRANSFERASE-RELATED"/>
    <property type="match status" value="1"/>
</dbReference>
<dbReference type="Pfam" id="PF01171">
    <property type="entry name" value="ATP_bind_3"/>
    <property type="match status" value="1"/>
</dbReference>
<dbReference type="PIRSF" id="PIRSF004976">
    <property type="entry name" value="ATPase_YdaO"/>
    <property type="match status" value="1"/>
</dbReference>
<dbReference type="SUPFAM" id="SSF52402">
    <property type="entry name" value="Adenine nucleotide alpha hydrolases-like"/>
    <property type="match status" value="1"/>
</dbReference>
<name>TTCA_PSEPW</name>
<reference key="1">
    <citation type="submission" date="2008-02" db="EMBL/GenBank/DDBJ databases">
        <title>Complete sequence of Pseudomonas putida W619.</title>
        <authorList>
            <person name="Copeland A."/>
            <person name="Lucas S."/>
            <person name="Lapidus A."/>
            <person name="Barry K."/>
            <person name="Detter J.C."/>
            <person name="Glavina del Rio T."/>
            <person name="Dalin E."/>
            <person name="Tice H."/>
            <person name="Pitluck S."/>
            <person name="Chain P."/>
            <person name="Malfatti S."/>
            <person name="Shin M."/>
            <person name="Vergez L."/>
            <person name="Schmutz J."/>
            <person name="Larimer F."/>
            <person name="Land M."/>
            <person name="Hauser L."/>
            <person name="Kyrpides N."/>
            <person name="Kim E."/>
            <person name="Taghavi S."/>
            <person name="Vangronsveld D."/>
            <person name="van der Lelie D."/>
            <person name="Richardson P."/>
        </authorList>
    </citation>
    <scope>NUCLEOTIDE SEQUENCE [LARGE SCALE GENOMIC DNA]</scope>
    <source>
        <strain>W619</strain>
    </source>
</reference>
<keyword id="KW-0004">4Fe-4S</keyword>
<keyword id="KW-0067">ATP-binding</keyword>
<keyword id="KW-0963">Cytoplasm</keyword>
<keyword id="KW-0408">Iron</keyword>
<keyword id="KW-0411">Iron-sulfur</keyword>
<keyword id="KW-0460">Magnesium</keyword>
<keyword id="KW-0479">Metal-binding</keyword>
<keyword id="KW-0547">Nucleotide-binding</keyword>
<keyword id="KW-0694">RNA-binding</keyword>
<keyword id="KW-0808">Transferase</keyword>
<keyword id="KW-0819">tRNA processing</keyword>
<keyword id="KW-0820">tRNA-binding</keyword>
<sequence length="274" mass="31089">MGTLSVNQNKLQKRLRRLAGEAITDYNMIEDGDKVMVCLSGGKDSYTMLDVLLHLQKVAPIKFEIVAVNMDQKQPGFPEHVLPAYLKELGVEYHIVEKDTYSVVKELVPEGKTTCSLCSRLRRGTLYTFADEIGATKMALGHHRDDIVETFFLNMFFNGSLKGMPPKLRADDGRNVVIRPLAYCSEKDIQAYSDMKEFPIIPCNLCGSQENLQRQVVKDMLVEWERKHPGRTESIFRALQNVAPSQLADRNLFDFTSLKIDESATPRFLDVLNI</sequence>
<organism>
    <name type="scientific">Pseudomonas putida (strain W619)</name>
    <dbReference type="NCBI Taxonomy" id="390235"/>
    <lineage>
        <taxon>Bacteria</taxon>
        <taxon>Pseudomonadati</taxon>
        <taxon>Pseudomonadota</taxon>
        <taxon>Gammaproteobacteria</taxon>
        <taxon>Pseudomonadales</taxon>
        <taxon>Pseudomonadaceae</taxon>
        <taxon>Pseudomonas</taxon>
    </lineage>
</organism>
<feature type="chain" id="PRO_0000348801" description="tRNA-cytidine(32) 2-sulfurtransferase">
    <location>
        <begin position="1"/>
        <end position="274"/>
    </location>
</feature>
<feature type="short sequence motif" description="PP-loop motif" evidence="1">
    <location>
        <begin position="40"/>
        <end position="45"/>
    </location>
</feature>
<feature type="binding site" evidence="1">
    <location>
        <position position="115"/>
    </location>
    <ligand>
        <name>[4Fe-4S] cluster</name>
        <dbReference type="ChEBI" id="CHEBI:49883"/>
    </ligand>
</feature>
<feature type="binding site" evidence="1">
    <location>
        <position position="118"/>
    </location>
    <ligand>
        <name>[4Fe-4S] cluster</name>
        <dbReference type="ChEBI" id="CHEBI:49883"/>
    </ligand>
</feature>
<feature type="binding site" evidence="1">
    <location>
        <position position="206"/>
    </location>
    <ligand>
        <name>[4Fe-4S] cluster</name>
        <dbReference type="ChEBI" id="CHEBI:49883"/>
    </ligand>
</feature>
<comment type="function">
    <text evidence="1">Catalyzes the ATP-dependent 2-thiolation of cytidine in position 32 of tRNA, to form 2-thiocytidine (s(2)C32). The sulfur atoms are provided by the cysteine/cysteine desulfurase (IscS) system.</text>
</comment>
<comment type="catalytic activity">
    <reaction evidence="1">
        <text>cytidine(32) in tRNA + S-sulfanyl-L-cysteinyl-[cysteine desulfurase] + AH2 + ATP = 2-thiocytidine(32) in tRNA + L-cysteinyl-[cysteine desulfurase] + A + AMP + diphosphate + H(+)</text>
        <dbReference type="Rhea" id="RHEA:57048"/>
        <dbReference type="Rhea" id="RHEA-COMP:10288"/>
        <dbReference type="Rhea" id="RHEA-COMP:12157"/>
        <dbReference type="Rhea" id="RHEA-COMP:12158"/>
        <dbReference type="Rhea" id="RHEA-COMP:14821"/>
        <dbReference type="ChEBI" id="CHEBI:13193"/>
        <dbReference type="ChEBI" id="CHEBI:15378"/>
        <dbReference type="ChEBI" id="CHEBI:17499"/>
        <dbReference type="ChEBI" id="CHEBI:29950"/>
        <dbReference type="ChEBI" id="CHEBI:30616"/>
        <dbReference type="ChEBI" id="CHEBI:33019"/>
        <dbReference type="ChEBI" id="CHEBI:61963"/>
        <dbReference type="ChEBI" id="CHEBI:82748"/>
        <dbReference type="ChEBI" id="CHEBI:141453"/>
        <dbReference type="ChEBI" id="CHEBI:456215"/>
    </reaction>
    <physiologicalReaction direction="left-to-right" evidence="1">
        <dbReference type="Rhea" id="RHEA:57049"/>
    </physiologicalReaction>
</comment>
<comment type="cofactor">
    <cofactor evidence="1">
        <name>Mg(2+)</name>
        <dbReference type="ChEBI" id="CHEBI:18420"/>
    </cofactor>
</comment>
<comment type="cofactor">
    <cofactor evidence="1">
        <name>[4Fe-4S] cluster</name>
        <dbReference type="ChEBI" id="CHEBI:49883"/>
    </cofactor>
    <text evidence="1">Binds 1 [4Fe-4S] cluster per subunit. The cluster is chelated by three Cys residues, the fourth Fe has a free coordination site that may bind a sulfur atom transferred from the persulfide of IscS.</text>
</comment>
<comment type="pathway">
    <text evidence="1">tRNA modification.</text>
</comment>
<comment type="subunit">
    <text evidence="1">Homodimer.</text>
</comment>
<comment type="subcellular location">
    <subcellularLocation>
        <location evidence="1">Cytoplasm</location>
    </subcellularLocation>
</comment>
<comment type="miscellaneous">
    <text evidence="1">The thiolation reaction likely consists of two steps: a first activation step by ATP to form an adenylated intermediate of the target base of tRNA, and a second nucleophilic substitution step of the sulfur (S) atom supplied by the hydrosulfide attached to the Fe-S cluster.</text>
</comment>
<comment type="similarity">
    <text evidence="1">Belongs to the TtcA family.</text>
</comment>
<gene>
    <name evidence="1" type="primary">ttcA</name>
    <name type="ordered locus">PputW619_1203</name>
</gene>